<comment type="function">
    <text evidence="1">Functions in the N-end rule pathway of protein degradation where it conjugates Leu, Phe and, less efficiently, Met from aminoacyl-tRNAs to the N-termini of proteins containing an N-terminal arginine or lysine.</text>
</comment>
<comment type="catalytic activity">
    <reaction evidence="1">
        <text>N-terminal L-lysyl-[protein] + L-leucyl-tRNA(Leu) = N-terminal L-leucyl-L-lysyl-[protein] + tRNA(Leu) + H(+)</text>
        <dbReference type="Rhea" id="RHEA:12340"/>
        <dbReference type="Rhea" id="RHEA-COMP:9613"/>
        <dbReference type="Rhea" id="RHEA-COMP:9622"/>
        <dbReference type="Rhea" id="RHEA-COMP:12670"/>
        <dbReference type="Rhea" id="RHEA-COMP:12671"/>
        <dbReference type="ChEBI" id="CHEBI:15378"/>
        <dbReference type="ChEBI" id="CHEBI:65249"/>
        <dbReference type="ChEBI" id="CHEBI:78442"/>
        <dbReference type="ChEBI" id="CHEBI:78494"/>
        <dbReference type="ChEBI" id="CHEBI:133043"/>
        <dbReference type="EC" id="2.3.2.6"/>
    </reaction>
</comment>
<comment type="catalytic activity">
    <reaction evidence="1">
        <text>N-terminal L-arginyl-[protein] + L-leucyl-tRNA(Leu) = N-terminal L-leucyl-L-arginyl-[protein] + tRNA(Leu) + H(+)</text>
        <dbReference type="Rhea" id="RHEA:50416"/>
        <dbReference type="Rhea" id="RHEA-COMP:9613"/>
        <dbReference type="Rhea" id="RHEA-COMP:9622"/>
        <dbReference type="Rhea" id="RHEA-COMP:12672"/>
        <dbReference type="Rhea" id="RHEA-COMP:12673"/>
        <dbReference type="ChEBI" id="CHEBI:15378"/>
        <dbReference type="ChEBI" id="CHEBI:64719"/>
        <dbReference type="ChEBI" id="CHEBI:78442"/>
        <dbReference type="ChEBI" id="CHEBI:78494"/>
        <dbReference type="ChEBI" id="CHEBI:133044"/>
        <dbReference type="EC" id="2.3.2.6"/>
    </reaction>
</comment>
<comment type="catalytic activity">
    <reaction evidence="1">
        <text>L-phenylalanyl-tRNA(Phe) + an N-terminal L-alpha-aminoacyl-[protein] = an N-terminal L-phenylalanyl-L-alpha-aminoacyl-[protein] + tRNA(Phe)</text>
        <dbReference type="Rhea" id="RHEA:43632"/>
        <dbReference type="Rhea" id="RHEA-COMP:9668"/>
        <dbReference type="Rhea" id="RHEA-COMP:9699"/>
        <dbReference type="Rhea" id="RHEA-COMP:10636"/>
        <dbReference type="Rhea" id="RHEA-COMP:10637"/>
        <dbReference type="ChEBI" id="CHEBI:78442"/>
        <dbReference type="ChEBI" id="CHEBI:78531"/>
        <dbReference type="ChEBI" id="CHEBI:78597"/>
        <dbReference type="ChEBI" id="CHEBI:83561"/>
        <dbReference type="EC" id="2.3.2.6"/>
    </reaction>
</comment>
<comment type="subcellular location">
    <subcellularLocation>
        <location evidence="1">Cytoplasm</location>
    </subcellularLocation>
</comment>
<comment type="similarity">
    <text evidence="1">Belongs to the L/F-transferase family.</text>
</comment>
<evidence type="ECO:0000255" key="1">
    <source>
        <dbReference type="HAMAP-Rule" id="MF_00688"/>
    </source>
</evidence>
<gene>
    <name evidence="1" type="primary">aat</name>
    <name type="ordered locus">Bpet0933</name>
</gene>
<organism>
    <name type="scientific">Bordetella petrii (strain ATCC BAA-461 / DSM 12804 / CCUG 43448)</name>
    <dbReference type="NCBI Taxonomy" id="340100"/>
    <lineage>
        <taxon>Bacteria</taxon>
        <taxon>Pseudomonadati</taxon>
        <taxon>Pseudomonadota</taxon>
        <taxon>Betaproteobacteria</taxon>
        <taxon>Burkholderiales</taxon>
        <taxon>Alcaligenaceae</taxon>
        <taxon>Bordetella</taxon>
    </lineage>
</organism>
<feature type="chain" id="PRO_1000131904" description="Leucyl/phenylalanyl-tRNA--protein transferase">
    <location>
        <begin position="1"/>
        <end position="253"/>
    </location>
</feature>
<name>LFTR_BORPD</name>
<protein>
    <recommendedName>
        <fullName evidence="1">Leucyl/phenylalanyl-tRNA--protein transferase</fullName>
        <ecNumber evidence="1">2.3.2.6</ecNumber>
    </recommendedName>
    <alternativeName>
        <fullName evidence="1">L/F-transferase</fullName>
    </alternativeName>
    <alternativeName>
        <fullName evidence="1">Leucyltransferase</fullName>
    </alternativeName>
    <alternativeName>
        <fullName evidence="1">Phenyalanyltransferase</fullName>
    </alternativeName>
</protein>
<keyword id="KW-0012">Acyltransferase</keyword>
<keyword id="KW-0963">Cytoplasm</keyword>
<keyword id="KW-0808">Transferase</keyword>
<reference key="1">
    <citation type="journal article" date="2008" name="BMC Genomics">
        <title>The missing link: Bordetella petrii is endowed with both the metabolic versatility of environmental bacteria and virulence traits of pathogenic Bordetellae.</title>
        <authorList>
            <person name="Gross R."/>
            <person name="Guzman C.A."/>
            <person name="Sebaihia M."/>
            <person name="Martin dos Santos V.A.P."/>
            <person name="Pieper D.H."/>
            <person name="Koebnik R."/>
            <person name="Lechner M."/>
            <person name="Bartels D."/>
            <person name="Buhrmester J."/>
            <person name="Choudhuri J.V."/>
            <person name="Ebensen T."/>
            <person name="Gaigalat L."/>
            <person name="Herrmann S."/>
            <person name="Khachane A.N."/>
            <person name="Larisch C."/>
            <person name="Link S."/>
            <person name="Linke B."/>
            <person name="Meyer F."/>
            <person name="Mormann S."/>
            <person name="Nakunst D."/>
            <person name="Rueckert C."/>
            <person name="Schneiker-Bekel S."/>
            <person name="Schulze K."/>
            <person name="Voerholter F.-J."/>
            <person name="Yevsa T."/>
            <person name="Engle J.T."/>
            <person name="Goldman W.E."/>
            <person name="Puehler A."/>
            <person name="Goebel U.B."/>
            <person name="Goesmann A."/>
            <person name="Bloecker H."/>
            <person name="Kaiser O."/>
            <person name="Martinez-Arias R."/>
        </authorList>
    </citation>
    <scope>NUCLEOTIDE SEQUENCE [LARGE SCALE GENOMIC DNA]</scope>
    <source>
        <strain>ATCC BAA-461 / DSM 12804 / CCUG 43448</strain>
    </source>
</reference>
<accession>A9I8M6</accession>
<sequence>MKLPWLSPDTPFPPVEHALSDPAGLLAAGADLSLERLTAAYSNGIFPWYSEGEPILWWSPDPRMVLACADFAPSHSLRKLLRQIAREESALLPRVQVRVDTEFDAVVAQCAAPRDGQAGTWITADMQQAYRAWHAAGVAHSVETWIDGELAGGLYGISLGRMFFGESMFTRVPDASKVALAYLVAFLRRAGVEWIDCQQQTRHLASLGARPVPRARFVEHIRQAIAGPAPAWQSGRLDSQGSLHPAPVSTLLY</sequence>
<proteinExistence type="inferred from homology"/>
<dbReference type="EC" id="2.3.2.6" evidence="1"/>
<dbReference type="EMBL" id="AM902716">
    <property type="protein sequence ID" value="CAP41265.1"/>
    <property type="molecule type" value="Genomic_DNA"/>
</dbReference>
<dbReference type="SMR" id="A9I8M6"/>
<dbReference type="STRING" id="94624.Bpet0933"/>
<dbReference type="KEGG" id="bpt:Bpet0933"/>
<dbReference type="eggNOG" id="COG2360">
    <property type="taxonomic scope" value="Bacteria"/>
</dbReference>
<dbReference type="Proteomes" id="UP000001225">
    <property type="component" value="Chromosome"/>
</dbReference>
<dbReference type="GO" id="GO:0005737">
    <property type="term" value="C:cytoplasm"/>
    <property type="evidence" value="ECO:0007669"/>
    <property type="project" value="UniProtKB-SubCell"/>
</dbReference>
<dbReference type="GO" id="GO:0008914">
    <property type="term" value="F:leucyl-tRNA--protein transferase activity"/>
    <property type="evidence" value="ECO:0007669"/>
    <property type="project" value="UniProtKB-UniRule"/>
</dbReference>
<dbReference type="GO" id="GO:0030163">
    <property type="term" value="P:protein catabolic process"/>
    <property type="evidence" value="ECO:0007669"/>
    <property type="project" value="UniProtKB-UniRule"/>
</dbReference>
<dbReference type="FunFam" id="3.30.70.3550:FF:000001">
    <property type="entry name" value="Leucyl/phenylalanyl-tRNA--protein transferase"/>
    <property type="match status" value="1"/>
</dbReference>
<dbReference type="Gene3D" id="3.40.630.70">
    <property type="entry name" value="Leucyl/phenylalanyl-tRNA-protein transferase, C-terminal domain"/>
    <property type="match status" value="1"/>
</dbReference>
<dbReference type="Gene3D" id="3.30.70.3550">
    <property type="entry name" value="Leucyl/phenylalanyl-tRNA-protein transferase, N-terminal domain"/>
    <property type="match status" value="1"/>
</dbReference>
<dbReference type="HAMAP" id="MF_00688">
    <property type="entry name" value="Leu_Phe_trans"/>
    <property type="match status" value="1"/>
</dbReference>
<dbReference type="InterPro" id="IPR016181">
    <property type="entry name" value="Acyl_CoA_acyltransferase"/>
</dbReference>
<dbReference type="InterPro" id="IPR004616">
    <property type="entry name" value="Leu/Phe-tRNA_Trfase"/>
</dbReference>
<dbReference type="InterPro" id="IPR042203">
    <property type="entry name" value="Leu/Phe-tRNA_Trfase_C"/>
</dbReference>
<dbReference type="InterPro" id="IPR042221">
    <property type="entry name" value="Leu/Phe-tRNA_Trfase_N"/>
</dbReference>
<dbReference type="NCBIfam" id="TIGR00667">
    <property type="entry name" value="aat"/>
    <property type="match status" value="1"/>
</dbReference>
<dbReference type="PANTHER" id="PTHR30098">
    <property type="entry name" value="LEUCYL/PHENYLALANYL-TRNA--PROTEIN TRANSFERASE"/>
    <property type="match status" value="1"/>
</dbReference>
<dbReference type="PANTHER" id="PTHR30098:SF2">
    <property type="entry name" value="LEUCYL_PHENYLALANYL-TRNA--PROTEIN TRANSFERASE"/>
    <property type="match status" value="1"/>
</dbReference>
<dbReference type="Pfam" id="PF03588">
    <property type="entry name" value="Leu_Phe_trans"/>
    <property type="match status" value="1"/>
</dbReference>
<dbReference type="SUPFAM" id="SSF55729">
    <property type="entry name" value="Acyl-CoA N-acyltransferases (Nat)"/>
    <property type="match status" value="1"/>
</dbReference>